<gene>
    <name evidence="1" type="primary">rpmJ</name>
    <name type="ordered locus">Bcav_3116</name>
</gene>
<proteinExistence type="inferred from homology"/>
<reference key="1">
    <citation type="journal article" date="2009" name="Stand. Genomic Sci.">
        <title>Complete genome sequence of Beutenbergia cavernae type strain (HKI 0122).</title>
        <authorList>
            <person name="Land M."/>
            <person name="Pukall R."/>
            <person name="Abt B."/>
            <person name="Goker M."/>
            <person name="Rohde M."/>
            <person name="Glavina Del Rio T."/>
            <person name="Tice H."/>
            <person name="Copeland A."/>
            <person name="Cheng J.F."/>
            <person name="Lucas S."/>
            <person name="Chen F."/>
            <person name="Nolan M."/>
            <person name="Bruce D."/>
            <person name="Goodwin L."/>
            <person name="Pitluck S."/>
            <person name="Ivanova N."/>
            <person name="Mavromatis K."/>
            <person name="Ovchinnikova G."/>
            <person name="Pati A."/>
            <person name="Chen A."/>
            <person name="Palaniappan K."/>
            <person name="Hauser L."/>
            <person name="Chang Y.J."/>
            <person name="Jefferies C.C."/>
            <person name="Saunders E."/>
            <person name="Brettin T."/>
            <person name="Detter J.C."/>
            <person name="Han C."/>
            <person name="Chain P."/>
            <person name="Bristow J."/>
            <person name="Eisen J.A."/>
            <person name="Markowitz V."/>
            <person name="Hugenholtz P."/>
            <person name="Kyrpides N.C."/>
            <person name="Klenk H.P."/>
            <person name="Lapidus A."/>
        </authorList>
    </citation>
    <scope>NUCLEOTIDE SEQUENCE [LARGE SCALE GENOMIC DNA]</scope>
    <source>
        <strain>ATCC BAA-8 / DSM 12333 / CCUG 43141 / JCM 11478 / NBRC 16432 / NCIMB 13614 / HKI 0122</strain>
    </source>
</reference>
<evidence type="ECO:0000255" key="1">
    <source>
        <dbReference type="HAMAP-Rule" id="MF_00251"/>
    </source>
</evidence>
<evidence type="ECO:0000305" key="2"/>
<sequence>MKVKPSVKPICDKCKVIRRHGRVMVICENLRHKQRQG</sequence>
<protein>
    <recommendedName>
        <fullName evidence="1">Large ribosomal subunit protein bL36</fullName>
    </recommendedName>
    <alternativeName>
        <fullName evidence="2">50S ribosomal protein L36</fullName>
    </alternativeName>
</protein>
<accession>C5C0G4</accession>
<comment type="similarity">
    <text evidence="1">Belongs to the bacterial ribosomal protein bL36 family.</text>
</comment>
<name>RL36_BEUC1</name>
<feature type="chain" id="PRO_1000204541" description="Large ribosomal subunit protein bL36">
    <location>
        <begin position="1"/>
        <end position="37"/>
    </location>
</feature>
<keyword id="KW-1185">Reference proteome</keyword>
<keyword id="KW-0687">Ribonucleoprotein</keyword>
<keyword id="KW-0689">Ribosomal protein</keyword>
<dbReference type="EMBL" id="CP001618">
    <property type="protein sequence ID" value="ACQ81360.1"/>
    <property type="molecule type" value="Genomic_DNA"/>
</dbReference>
<dbReference type="RefSeq" id="WP_015883600.1">
    <property type="nucleotide sequence ID" value="NC_012669.1"/>
</dbReference>
<dbReference type="SMR" id="C5C0G4"/>
<dbReference type="STRING" id="471853.Bcav_3116"/>
<dbReference type="KEGG" id="bcv:Bcav_3116"/>
<dbReference type="eggNOG" id="COG0257">
    <property type="taxonomic scope" value="Bacteria"/>
</dbReference>
<dbReference type="HOGENOM" id="CLU_135723_6_2_11"/>
<dbReference type="OrthoDB" id="9802520at2"/>
<dbReference type="Proteomes" id="UP000007962">
    <property type="component" value="Chromosome"/>
</dbReference>
<dbReference type="GO" id="GO:0005737">
    <property type="term" value="C:cytoplasm"/>
    <property type="evidence" value="ECO:0007669"/>
    <property type="project" value="UniProtKB-ARBA"/>
</dbReference>
<dbReference type="GO" id="GO:1990904">
    <property type="term" value="C:ribonucleoprotein complex"/>
    <property type="evidence" value="ECO:0007669"/>
    <property type="project" value="UniProtKB-KW"/>
</dbReference>
<dbReference type="GO" id="GO:0005840">
    <property type="term" value="C:ribosome"/>
    <property type="evidence" value="ECO:0007669"/>
    <property type="project" value="UniProtKB-KW"/>
</dbReference>
<dbReference type="GO" id="GO:0003735">
    <property type="term" value="F:structural constituent of ribosome"/>
    <property type="evidence" value="ECO:0007669"/>
    <property type="project" value="InterPro"/>
</dbReference>
<dbReference type="GO" id="GO:0006412">
    <property type="term" value="P:translation"/>
    <property type="evidence" value="ECO:0007669"/>
    <property type="project" value="UniProtKB-UniRule"/>
</dbReference>
<dbReference type="HAMAP" id="MF_00251">
    <property type="entry name" value="Ribosomal_bL36"/>
    <property type="match status" value="1"/>
</dbReference>
<dbReference type="InterPro" id="IPR000473">
    <property type="entry name" value="Ribosomal_bL36"/>
</dbReference>
<dbReference type="InterPro" id="IPR035977">
    <property type="entry name" value="Ribosomal_bL36_sp"/>
</dbReference>
<dbReference type="NCBIfam" id="TIGR01022">
    <property type="entry name" value="rpmJ_bact"/>
    <property type="match status" value="1"/>
</dbReference>
<dbReference type="PANTHER" id="PTHR42888">
    <property type="entry name" value="50S RIBOSOMAL PROTEIN L36, CHLOROPLASTIC"/>
    <property type="match status" value="1"/>
</dbReference>
<dbReference type="PANTHER" id="PTHR42888:SF1">
    <property type="entry name" value="LARGE RIBOSOMAL SUBUNIT PROTEIN BL36C"/>
    <property type="match status" value="1"/>
</dbReference>
<dbReference type="Pfam" id="PF00444">
    <property type="entry name" value="Ribosomal_L36"/>
    <property type="match status" value="1"/>
</dbReference>
<dbReference type="SUPFAM" id="SSF57840">
    <property type="entry name" value="Ribosomal protein L36"/>
    <property type="match status" value="1"/>
</dbReference>
<dbReference type="PROSITE" id="PS00828">
    <property type="entry name" value="RIBOSOMAL_L36"/>
    <property type="match status" value="1"/>
</dbReference>
<organism>
    <name type="scientific">Beutenbergia cavernae (strain ATCC BAA-8 / DSM 12333 / CCUG 43141 / JCM 11478 / NBRC 16432 / NCIMB 13614 / HKI 0122)</name>
    <dbReference type="NCBI Taxonomy" id="471853"/>
    <lineage>
        <taxon>Bacteria</taxon>
        <taxon>Bacillati</taxon>
        <taxon>Actinomycetota</taxon>
        <taxon>Actinomycetes</taxon>
        <taxon>Micrococcales</taxon>
        <taxon>Beutenbergiaceae</taxon>
        <taxon>Beutenbergia</taxon>
    </lineage>
</organism>